<name>BN3D2_DROME</name>
<comment type="function">
    <text evidence="5">Probable S-adenosyl-L-methionine-dependent methyltransferase that binds and stabilizes U6 snRNA, probably by adding a methylphosphate cap at its 5'-end (PubMed:38100593). Required for U6 stability, but not stability of 7SK snRNAs, other miRNAs or tRNAs (PubMed:38100593). U6 stabilization is required for efficient pre-mRNA splicing (PubMed:38100593). Essential for organismal and germline development (PubMed:38100593).</text>
</comment>
<comment type="interaction">
    <interactant intactId="EBI-1629458">
        <id>Q9VNH1</id>
    </interactant>
    <interactant intactId="EBI-26753280">
        <id>Q7K3B9</id>
        <label>CG7544</label>
    </interactant>
    <organismsDiffer>false</organismsDiffer>
    <experiments>3</experiments>
</comment>
<comment type="subcellular location">
    <subcellularLocation>
        <location evidence="5">Nucleus</location>
    </subcellularLocation>
</comment>
<comment type="disruption phenotype">
    <text evidence="4 5">Embryonic or larval lethal (PubMed:31145769, PubMed:38100593). Conditional knockdown in ovary leads to female sterility, possibly caused by dysregulation of miRNAs and mRNAsso (PubMed:31145769).</text>
</comment>
<comment type="similarity">
    <text evidence="8">Belongs to the methyltransferase superfamily.</text>
</comment>
<organism evidence="10">
    <name type="scientific">Drosophila melanogaster</name>
    <name type="common">Fruit fly</name>
    <dbReference type="NCBI Taxonomy" id="7227"/>
    <lineage>
        <taxon>Eukaryota</taxon>
        <taxon>Metazoa</taxon>
        <taxon>Ecdysozoa</taxon>
        <taxon>Arthropoda</taxon>
        <taxon>Hexapoda</taxon>
        <taxon>Insecta</taxon>
        <taxon>Pterygota</taxon>
        <taxon>Neoptera</taxon>
        <taxon>Endopterygota</taxon>
        <taxon>Diptera</taxon>
        <taxon>Brachycera</taxon>
        <taxon>Muscomorpha</taxon>
        <taxon>Ephydroidea</taxon>
        <taxon>Drosophilidae</taxon>
        <taxon>Drosophila</taxon>
        <taxon>Sophophora</taxon>
    </lineage>
</organism>
<sequence>MDLENNNNTPLTGKQAEKCAKKRKCVITLDEKQVESKRLKKEESNVEATSRPPAQSPKKRLHLNGKPMQNKDLNFKYGNYKHYYGKRILNKDFHDIRLDVLGTQPDLFRNKQLLDIGCNSGHLSIQIARKFEVKSLVGLDIDRGLINDAQKTVSHLKRHATPGQGIPHIQFVHGNYVLEDDVLLEIERPQFDVILCLSVTKWIHLNFCDSGLKQAFRRMYLQLRPGGKLILEPQSFDGYKRRKKLSEQIRDNYNAIKFRPDHFTEYLLSPEVGFAEMKLMGIPEHCKVGFKRPIQIFTKS</sequence>
<gene>
    <name evidence="7 9" type="primary">Amus</name>
    <name evidence="6" type="synonym">BCDIN3D</name>
    <name evidence="9" type="ORF">CG1239</name>
</gene>
<feature type="chain" id="PRO_0000289270" description="U6 snRNA methylphosphate capping enzyme Amus">
    <location>
        <begin position="1"/>
        <end position="300"/>
    </location>
</feature>
<feature type="domain" description="Bin3-type SAM" evidence="2">
    <location>
        <begin position="95"/>
        <end position="300"/>
    </location>
</feature>
<feature type="region of interest" description="Disordered" evidence="3">
    <location>
        <begin position="1"/>
        <end position="21"/>
    </location>
</feature>
<feature type="region of interest" description="Disordered" evidence="3">
    <location>
        <begin position="34"/>
        <end position="68"/>
    </location>
</feature>
<feature type="compositionally biased region" description="Polar residues" evidence="3">
    <location>
        <begin position="1"/>
        <end position="12"/>
    </location>
</feature>
<feature type="compositionally biased region" description="Basic and acidic residues" evidence="3">
    <location>
        <begin position="34"/>
        <end position="44"/>
    </location>
</feature>
<feature type="binding site" evidence="1">
    <location>
        <position position="119"/>
    </location>
    <ligand>
        <name>S-adenosyl-L-methionine</name>
        <dbReference type="ChEBI" id="CHEBI:59789"/>
    </ligand>
</feature>
<feature type="binding site" evidence="1">
    <location>
        <position position="140"/>
    </location>
    <ligand>
        <name>S-adenosyl-L-methionine</name>
        <dbReference type="ChEBI" id="CHEBI:59789"/>
    </ligand>
</feature>
<feature type="sequence variant" description="In strain: ZBMEL377.">
    <original>A</original>
    <variation>P</variation>
    <location>
        <position position="16"/>
    </location>
</feature>
<feature type="sequence variant" description="In strain: ZBMEL84, ZBMEL95, ZBMEL131 and ZBMEL157.">
    <original>T</original>
    <variation>K</variation>
    <location>
        <position position="298"/>
    </location>
</feature>
<feature type="mutagenesis site" description="Unable to rescue early lethality phenotype of mutant flies." evidence="5">
    <original>Y</original>
    <variation>F</variation>
    <location>
        <position position="83"/>
    </location>
</feature>
<feature type="mutagenesis site" description="Able to rescue early lethality phenotype but not sterility phenotype of mutant flies." evidence="5">
    <original>Y</original>
    <variation>A</variation>
    <location>
        <position position="84"/>
    </location>
</feature>
<feature type="mutagenesis site" description="Unable to rescue early lethality phenotype of mutant flies." evidence="5">
    <original>K</original>
    <variation>A</variation>
    <location>
        <position position="201"/>
    </location>
</feature>
<protein>
    <recommendedName>
        <fullName evidence="8">U6 snRNA methylphosphate capping enzyme Amus</fullName>
        <ecNumber evidence="1">2.1.1.-</ecNumber>
    </recommendedName>
    <alternativeName>
        <fullName evidence="7 9">Protein another methylase of U6</fullName>
    </alternativeName>
</protein>
<keyword id="KW-0489">Methyltransferase</keyword>
<keyword id="KW-0539">Nucleus</keyword>
<keyword id="KW-1185">Reference proteome</keyword>
<keyword id="KW-0949">S-adenosyl-L-methionine</keyword>
<keyword id="KW-0808">Transferase</keyword>
<proteinExistence type="evidence at protein level"/>
<reference key="1">
    <citation type="journal article" date="2006" name="Genetics">
        <title>Widespread adaptive evolution of Drosophila genes with sex-biased expression.</title>
        <authorList>
            <person name="Proeschel M."/>
            <person name="Zhang Z."/>
            <person name="Parsch J."/>
        </authorList>
    </citation>
    <scope>NUCLEOTIDE SEQUENCE [GENOMIC DNA]</scope>
    <source>
        <strain>ZBMEL131</strain>
        <strain>ZBMEL145</strain>
        <strain>ZBMEL157</strain>
        <strain>ZBMEL186</strain>
        <strain>ZBMEL191</strain>
        <strain>ZBMEL229</strain>
        <strain>ZBMEL377</strain>
        <strain>ZBMEL384</strain>
        <strain>ZBMEL398</strain>
        <strain>ZBMEL82</strain>
        <strain>ZBMEL84</strain>
        <strain>ZBMEL95</strain>
    </source>
</reference>
<reference key="2">
    <citation type="journal article" date="2009" name="Mol. Biol. Evol.">
        <title>The influence of demography and weak selection on the McDonald-Kreitman test: an empirical study in Drosophila.</title>
        <authorList>
            <person name="Parsch J."/>
            <person name="Zhang Z."/>
            <person name="Baines J.F."/>
        </authorList>
    </citation>
    <scope>NUCLEOTIDE SEQUENCE [GENOMIC DNA]</scope>
    <source>
        <strain>MEL01</strain>
        <strain>MEL11</strain>
        <strain>MEL12</strain>
        <strain>MEL13</strain>
        <strain>MEL14</strain>
        <strain>MEL15</strain>
        <strain>MEL16</strain>
        <strain>MEL17</strain>
        <strain>MEL18</strain>
        <strain>MEL19</strain>
        <strain>MEL20</strain>
    </source>
</reference>
<reference key="3">
    <citation type="journal article" date="2000" name="Science">
        <title>The genome sequence of Drosophila melanogaster.</title>
        <authorList>
            <person name="Adams M.D."/>
            <person name="Celniker S.E."/>
            <person name="Holt R.A."/>
            <person name="Evans C.A."/>
            <person name="Gocayne J.D."/>
            <person name="Amanatides P.G."/>
            <person name="Scherer S.E."/>
            <person name="Li P.W."/>
            <person name="Hoskins R.A."/>
            <person name="Galle R.F."/>
            <person name="George R.A."/>
            <person name="Lewis S.E."/>
            <person name="Richards S."/>
            <person name="Ashburner M."/>
            <person name="Henderson S.N."/>
            <person name="Sutton G.G."/>
            <person name="Wortman J.R."/>
            <person name="Yandell M.D."/>
            <person name="Zhang Q."/>
            <person name="Chen L.X."/>
            <person name="Brandon R.C."/>
            <person name="Rogers Y.-H.C."/>
            <person name="Blazej R.G."/>
            <person name="Champe M."/>
            <person name="Pfeiffer B.D."/>
            <person name="Wan K.H."/>
            <person name="Doyle C."/>
            <person name="Baxter E.G."/>
            <person name="Helt G."/>
            <person name="Nelson C.R."/>
            <person name="Miklos G.L.G."/>
            <person name="Abril J.F."/>
            <person name="Agbayani A."/>
            <person name="An H.-J."/>
            <person name="Andrews-Pfannkoch C."/>
            <person name="Baldwin D."/>
            <person name="Ballew R.M."/>
            <person name="Basu A."/>
            <person name="Baxendale J."/>
            <person name="Bayraktaroglu L."/>
            <person name="Beasley E.M."/>
            <person name="Beeson K.Y."/>
            <person name="Benos P.V."/>
            <person name="Berman B.P."/>
            <person name="Bhandari D."/>
            <person name="Bolshakov S."/>
            <person name="Borkova D."/>
            <person name="Botchan M.R."/>
            <person name="Bouck J."/>
            <person name="Brokstein P."/>
            <person name="Brottier P."/>
            <person name="Burtis K.C."/>
            <person name="Busam D.A."/>
            <person name="Butler H."/>
            <person name="Cadieu E."/>
            <person name="Center A."/>
            <person name="Chandra I."/>
            <person name="Cherry J.M."/>
            <person name="Cawley S."/>
            <person name="Dahlke C."/>
            <person name="Davenport L.B."/>
            <person name="Davies P."/>
            <person name="de Pablos B."/>
            <person name="Delcher A."/>
            <person name="Deng Z."/>
            <person name="Mays A.D."/>
            <person name="Dew I."/>
            <person name="Dietz S.M."/>
            <person name="Dodson K."/>
            <person name="Doup L.E."/>
            <person name="Downes M."/>
            <person name="Dugan-Rocha S."/>
            <person name="Dunkov B.C."/>
            <person name="Dunn P."/>
            <person name="Durbin K.J."/>
            <person name="Evangelista C.C."/>
            <person name="Ferraz C."/>
            <person name="Ferriera S."/>
            <person name="Fleischmann W."/>
            <person name="Fosler C."/>
            <person name="Gabrielian A.E."/>
            <person name="Garg N.S."/>
            <person name="Gelbart W.M."/>
            <person name="Glasser K."/>
            <person name="Glodek A."/>
            <person name="Gong F."/>
            <person name="Gorrell J.H."/>
            <person name="Gu Z."/>
            <person name="Guan P."/>
            <person name="Harris M."/>
            <person name="Harris N.L."/>
            <person name="Harvey D.A."/>
            <person name="Heiman T.J."/>
            <person name="Hernandez J.R."/>
            <person name="Houck J."/>
            <person name="Hostin D."/>
            <person name="Houston K.A."/>
            <person name="Howland T.J."/>
            <person name="Wei M.-H."/>
            <person name="Ibegwam C."/>
            <person name="Jalali M."/>
            <person name="Kalush F."/>
            <person name="Karpen G.H."/>
            <person name="Ke Z."/>
            <person name="Kennison J.A."/>
            <person name="Ketchum K.A."/>
            <person name="Kimmel B.E."/>
            <person name="Kodira C.D."/>
            <person name="Kraft C.L."/>
            <person name="Kravitz S."/>
            <person name="Kulp D."/>
            <person name="Lai Z."/>
            <person name="Lasko P."/>
            <person name="Lei Y."/>
            <person name="Levitsky A.A."/>
            <person name="Li J.H."/>
            <person name="Li Z."/>
            <person name="Liang Y."/>
            <person name="Lin X."/>
            <person name="Liu X."/>
            <person name="Mattei B."/>
            <person name="McIntosh T.C."/>
            <person name="McLeod M.P."/>
            <person name="McPherson D."/>
            <person name="Merkulov G."/>
            <person name="Milshina N.V."/>
            <person name="Mobarry C."/>
            <person name="Morris J."/>
            <person name="Moshrefi A."/>
            <person name="Mount S.M."/>
            <person name="Moy M."/>
            <person name="Murphy B."/>
            <person name="Murphy L."/>
            <person name="Muzny D.M."/>
            <person name="Nelson D.L."/>
            <person name="Nelson D.R."/>
            <person name="Nelson K.A."/>
            <person name="Nixon K."/>
            <person name="Nusskern D.R."/>
            <person name="Pacleb J.M."/>
            <person name="Palazzolo M."/>
            <person name="Pittman G.S."/>
            <person name="Pan S."/>
            <person name="Pollard J."/>
            <person name="Puri V."/>
            <person name="Reese M.G."/>
            <person name="Reinert K."/>
            <person name="Remington K."/>
            <person name="Saunders R.D.C."/>
            <person name="Scheeler F."/>
            <person name="Shen H."/>
            <person name="Shue B.C."/>
            <person name="Siden-Kiamos I."/>
            <person name="Simpson M."/>
            <person name="Skupski M.P."/>
            <person name="Smith T.J."/>
            <person name="Spier E."/>
            <person name="Spradling A.C."/>
            <person name="Stapleton M."/>
            <person name="Strong R."/>
            <person name="Sun E."/>
            <person name="Svirskas R."/>
            <person name="Tector C."/>
            <person name="Turner R."/>
            <person name="Venter E."/>
            <person name="Wang A.H."/>
            <person name="Wang X."/>
            <person name="Wang Z.-Y."/>
            <person name="Wassarman D.A."/>
            <person name="Weinstock G.M."/>
            <person name="Weissenbach J."/>
            <person name="Williams S.M."/>
            <person name="Woodage T."/>
            <person name="Worley K.C."/>
            <person name="Wu D."/>
            <person name="Yang S."/>
            <person name="Yao Q.A."/>
            <person name="Ye J."/>
            <person name="Yeh R.-F."/>
            <person name="Zaveri J.S."/>
            <person name="Zhan M."/>
            <person name="Zhang G."/>
            <person name="Zhao Q."/>
            <person name="Zheng L."/>
            <person name="Zheng X.H."/>
            <person name="Zhong F.N."/>
            <person name="Zhong W."/>
            <person name="Zhou X."/>
            <person name="Zhu S.C."/>
            <person name="Zhu X."/>
            <person name="Smith H.O."/>
            <person name="Gibbs R.A."/>
            <person name="Myers E.W."/>
            <person name="Rubin G.M."/>
            <person name="Venter J.C."/>
        </authorList>
    </citation>
    <scope>NUCLEOTIDE SEQUENCE [LARGE SCALE GENOMIC DNA]</scope>
    <source>
        <strain>Berkeley</strain>
    </source>
</reference>
<reference key="4">
    <citation type="journal article" date="2002" name="Genome Biol.">
        <title>Annotation of the Drosophila melanogaster euchromatic genome: a systematic review.</title>
        <authorList>
            <person name="Misra S."/>
            <person name="Crosby M.A."/>
            <person name="Mungall C.J."/>
            <person name="Matthews B.B."/>
            <person name="Campbell K.S."/>
            <person name="Hradecky P."/>
            <person name="Huang Y."/>
            <person name="Kaminker J.S."/>
            <person name="Millburn G.H."/>
            <person name="Prochnik S.E."/>
            <person name="Smith C.D."/>
            <person name="Tupy J.L."/>
            <person name="Whitfield E.J."/>
            <person name="Bayraktaroglu L."/>
            <person name="Berman B.P."/>
            <person name="Bettencourt B.R."/>
            <person name="Celniker S.E."/>
            <person name="de Grey A.D.N.J."/>
            <person name="Drysdale R.A."/>
            <person name="Harris N.L."/>
            <person name="Richter J."/>
            <person name="Russo S."/>
            <person name="Schroeder A.J."/>
            <person name="Shu S.Q."/>
            <person name="Stapleton M."/>
            <person name="Yamada C."/>
            <person name="Ashburner M."/>
            <person name="Gelbart W.M."/>
            <person name="Rubin G.M."/>
            <person name="Lewis S.E."/>
        </authorList>
    </citation>
    <scope>GENOME REANNOTATION</scope>
    <source>
        <strain>Berkeley</strain>
    </source>
</reference>
<reference key="5">
    <citation type="submission" date="2003-01" db="EMBL/GenBank/DDBJ databases">
        <authorList>
            <person name="Stapleton M."/>
            <person name="Brokstein P."/>
            <person name="Hong L."/>
            <person name="Agbayani A."/>
            <person name="Carlson J.W."/>
            <person name="Champe M."/>
            <person name="Chavez C."/>
            <person name="Dorsett V."/>
            <person name="Dresnek D."/>
            <person name="Farfan D."/>
            <person name="Frise E."/>
            <person name="George R.A."/>
            <person name="Gonzalez M."/>
            <person name="Guarin H."/>
            <person name="Kronmiller B."/>
            <person name="Li P.W."/>
            <person name="Liao G."/>
            <person name="Miranda A."/>
            <person name="Mungall C.J."/>
            <person name="Nunoo J."/>
            <person name="Pacleb J.M."/>
            <person name="Paragas V."/>
            <person name="Park S."/>
            <person name="Patel S."/>
            <person name="Phouanenavong S."/>
            <person name="Wan K.H."/>
            <person name="Yu C."/>
            <person name="Lewis S.E."/>
            <person name="Rubin G.M."/>
            <person name="Celniker S.E."/>
        </authorList>
    </citation>
    <scope>NUCLEOTIDE SEQUENCE [LARGE SCALE MRNA]</scope>
    <source>
        <strain>Berkeley</strain>
        <tissue>Larva</tissue>
        <tissue>Pupae</tissue>
    </source>
</reference>
<reference key="6">
    <citation type="journal article" date="2019" name="PLoS ONE">
        <title>RNA methyltransferase BCDIN3D is crucial for female fertility and miRNA and mRNA profiles in Drosophila ovaries.</title>
        <authorList>
            <person name="Zhu L."/>
            <person name="Liao S.E."/>
            <person name="Ai Y."/>
            <person name="Fukunaga R."/>
        </authorList>
    </citation>
    <scope>DISRUPTION PHENOTYPE</scope>
</reference>
<reference key="7">
    <citation type="journal article" date="2023" name="Sci. Adv.">
        <title>Drosophila Amus and Bin3 methylases functionally replace mammalian MePCE for capping and the stabilization of U6 and 7SK snRNAs.</title>
        <authorList>
            <person name="Peng Q."/>
            <person name="Wang Y."/>
            <person name="Xiao Y."/>
            <person name="Chang H."/>
            <person name="Luo S."/>
            <person name="Wang D."/>
            <person name="Rong Y.S."/>
        </authorList>
    </citation>
    <scope>FUNCTION</scope>
    <scope>SUBCELLULAR LOCATION</scope>
    <scope>DISRUPTION PHENOTYPE</scope>
    <scope>MUTAGENESIS OF TYR-83; TYR-84 AND LYS-201</scope>
</reference>
<evidence type="ECO:0000250" key="1">
    <source>
        <dbReference type="UniProtKB" id="Q7Z5W3"/>
    </source>
</evidence>
<evidence type="ECO:0000255" key="2">
    <source>
        <dbReference type="PROSITE-ProRule" id="PRU00848"/>
    </source>
</evidence>
<evidence type="ECO:0000256" key="3">
    <source>
        <dbReference type="SAM" id="MobiDB-lite"/>
    </source>
</evidence>
<evidence type="ECO:0000269" key="4">
    <source>
    </source>
</evidence>
<evidence type="ECO:0000269" key="5">
    <source>
    </source>
</evidence>
<evidence type="ECO:0000303" key="6">
    <source>
    </source>
</evidence>
<evidence type="ECO:0000303" key="7">
    <source>
    </source>
</evidence>
<evidence type="ECO:0000305" key="8"/>
<evidence type="ECO:0000312" key="9">
    <source>
        <dbReference type="FlyBase" id="FBgn0037368"/>
    </source>
</evidence>
<evidence type="ECO:0000312" key="10">
    <source>
        <dbReference type="Proteomes" id="UP000000803"/>
    </source>
</evidence>
<accession>Q9VNH1</accession>
<accession>A0ANN6</accession>
<accession>A0ANP4</accession>
<accession>C0MJ20</accession>
<accession>C0MJ21</accession>
<dbReference type="EC" id="2.1.1.-" evidence="1"/>
<dbReference type="EMBL" id="AM294273">
    <property type="protein sequence ID" value="CAL26177.1"/>
    <property type="molecule type" value="Genomic_DNA"/>
</dbReference>
<dbReference type="EMBL" id="AM294274">
    <property type="protein sequence ID" value="CAL26178.1"/>
    <property type="molecule type" value="Genomic_DNA"/>
</dbReference>
<dbReference type="EMBL" id="AM294275">
    <property type="protein sequence ID" value="CAL26179.1"/>
    <property type="molecule type" value="Genomic_DNA"/>
</dbReference>
<dbReference type="EMBL" id="AM294276">
    <property type="protein sequence ID" value="CAL26180.1"/>
    <property type="molecule type" value="Genomic_DNA"/>
</dbReference>
<dbReference type="EMBL" id="AM294277">
    <property type="protein sequence ID" value="CAL26181.1"/>
    <property type="molecule type" value="Genomic_DNA"/>
</dbReference>
<dbReference type="EMBL" id="AM294278">
    <property type="protein sequence ID" value="CAL26182.1"/>
    <property type="molecule type" value="Genomic_DNA"/>
</dbReference>
<dbReference type="EMBL" id="AM294279">
    <property type="protein sequence ID" value="CAL26183.1"/>
    <property type="molecule type" value="Genomic_DNA"/>
</dbReference>
<dbReference type="EMBL" id="AM294280">
    <property type="protein sequence ID" value="CAL26184.1"/>
    <property type="molecule type" value="Genomic_DNA"/>
</dbReference>
<dbReference type="EMBL" id="AM294281">
    <property type="protein sequence ID" value="CAL26185.1"/>
    <property type="molecule type" value="Genomic_DNA"/>
</dbReference>
<dbReference type="EMBL" id="AM294282">
    <property type="protein sequence ID" value="CAL26186.1"/>
    <property type="molecule type" value="Genomic_DNA"/>
</dbReference>
<dbReference type="EMBL" id="AM294283">
    <property type="protein sequence ID" value="CAL26187.1"/>
    <property type="molecule type" value="Genomic_DNA"/>
</dbReference>
<dbReference type="EMBL" id="AM294284">
    <property type="protein sequence ID" value="CAL26188.1"/>
    <property type="molecule type" value="Genomic_DNA"/>
</dbReference>
<dbReference type="EMBL" id="AE014297">
    <property type="protein sequence ID" value="AAF51965.2"/>
    <property type="molecule type" value="Genomic_DNA"/>
</dbReference>
<dbReference type="EMBL" id="FM245342">
    <property type="protein sequence ID" value="CAR93268.1"/>
    <property type="molecule type" value="Genomic_DNA"/>
</dbReference>
<dbReference type="EMBL" id="FM245343">
    <property type="protein sequence ID" value="CAR93269.1"/>
    <property type="molecule type" value="Genomic_DNA"/>
</dbReference>
<dbReference type="EMBL" id="FM245344">
    <property type="protein sequence ID" value="CAR93270.1"/>
    <property type="molecule type" value="Genomic_DNA"/>
</dbReference>
<dbReference type="EMBL" id="FM245345">
    <property type="protein sequence ID" value="CAR93271.1"/>
    <property type="molecule type" value="Genomic_DNA"/>
</dbReference>
<dbReference type="EMBL" id="FM245346">
    <property type="protein sequence ID" value="CAR93272.1"/>
    <property type="molecule type" value="Genomic_DNA"/>
</dbReference>
<dbReference type="EMBL" id="FM245347">
    <property type="protein sequence ID" value="CAR93273.1"/>
    <property type="molecule type" value="Genomic_DNA"/>
</dbReference>
<dbReference type="EMBL" id="FM245348">
    <property type="protein sequence ID" value="CAR93274.1"/>
    <property type="molecule type" value="Genomic_DNA"/>
</dbReference>
<dbReference type="EMBL" id="FM245349">
    <property type="protein sequence ID" value="CAR93275.1"/>
    <property type="molecule type" value="Genomic_DNA"/>
</dbReference>
<dbReference type="EMBL" id="FM245350">
    <property type="protein sequence ID" value="CAR93276.1"/>
    <property type="molecule type" value="Genomic_DNA"/>
</dbReference>
<dbReference type="EMBL" id="FM245351">
    <property type="protein sequence ID" value="CAR93277.1"/>
    <property type="molecule type" value="Genomic_DNA"/>
</dbReference>
<dbReference type="EMBL" id="FM245352">
    <property type="protein sequence ID" value="CAR93278.1"/>
    <property type="molecule type" value="Genomic_DNA"/>
</dbReference>
<dbReference type="EMBL" id="AY061533">
    <property type="protein sequence ID" value="AAL29081.1"/>
    <property type="molecule type" value="mRNA"/>
</dbReference>
<dbReference type="RefSeq" id="NP_001287185.1">
    <property type="nucleotide sequence ID" value="NM_001300256.1"/>
</dbReference>
<dbReference type="RefSeq" id="NP_001287186.1">
    <property type="nucleotide sequence ID" value="NM_001300257.1"/>
</dbReference>
<dbReference type="RefSeq" id="NP_649577.1">
    <property type="nucleotide sequence ID" value="NM_141320.3"/>
</dbReference>
<dbReference type="SMR" id="Q9VNH1"/>
<dbReference type="BioGRID" id="65911">
    <property type="interactions" value="1"/>
</dbReference>
<dbReference type="FunCoup" id="Q9VNH1">
    <property type="interactions" value="261"/>
</dbReference>
<dbReference type="IntAct" id="Q9VNH1">
    <property type="interactions" value="7"/>
</dbReference>
<dbReference type="STRING" id="7227.FBpp0310437"/>
<dbReference type="PaxDb" id="7227-FBpp0078369"/>
<dbReference type="DNASU" id="40706"/>
<dbReference type="EnsemblMetazoa" id="FBtr0078720">
    <property type="protein sequence ID" value="FBpp0078369"/>
    <property type="gene ID" value="FBgn0037368"/>
</dbReference>
<dbReference type="EnsemblMetazoa" id="FBtr0343988">
    <property type="protein sequence ID" value="FBpp0310437"/>
    <property type="gene ID" value="FBgn0037368"/>
</dbReference>
<dbReference type="EnsemblMetazoa" id="FBtr0343989">
    <property type="protein sequence ID" value="FBpp0310438"/>
    <property type="gene ID" value="FBgn0037368"/>
</dbReference>
<dbReference type="GeneID" id="40706"/>
<dbReference type="KEGG" id="dme:Dmel_CG1239"/>
<dbReference type="UCSC" id="CG1239-RA">
    <property type="organism name" value="d. melanogaster"/>
</dbReference>
<dbReference type="AGR" id="FB:FBgn0037368"/>
<dbReference type="FlyBase" id="FBgn0037368">
    <property type="gene designation" value="Amus"/>
</dbReference>
<dbReference type="VEuPathDB" id="VectorBase:FBgn0037368"/>
<dbReference type="eggNOG" id="KOG2899">
    <property type="taxonomic scope" value="Eukaryota"/>
</dbReference>
<dbReference type="GeneTree" id="ENSGT00940000153993"/>
<dbReference type="HOGENOM" id="CLU_004729_0_0_1"/>
<dbReference type="InParanoid" id="Q9VNH1"/>
<dbReference type="OMA" id="KWIHLFH"/>
<dbReference type="OrthoDB" id="10017101at2759"/>
<dbReference type="PhylomeDB" id="Q9VNH1"/>
<dbReference type="BioGRID-ORCS" id="40706">
    <property type="hits" value="0 hits in 1 CRISPR screen"/>
</dbReference>
<dbReference type="GenomeRNAi" id="40706"/>
<dbReference type="PRO" id="PR:Q9VNH1"/>
<dbReference type="Proteomes" id="UP000000803">
    <property type="component" value="Chromosome 3R"/>
</dbReference>
<dbReference type="Bgee" id="FBgn0037368">
    <property type="expression patterns" value="Expressed in distal medullary amacrine neuron Dm11 in insect head and 48 other cell types or tissues"/>
</dbReference>
<dbReference type="ExpressionAtlas" id="Q9VNH1">
    <property type="expression patterns" value="baseline and differential"/>
</dbReference>
<dbReference type="GO" id="GO:0005634">
    <property type="term" value="C:nucleus"/>
    <property type="evidence" value="ECO:0000314"/>
    <property type="project" value="UniProtKB"/>
</dbReference>
<dbReference type="GO" id="GO:0008171">
    <property type="term" value="F:O-methyltransferase activity"/>
    <property type="evidence" value="ECO:0000318"/>
    <property type="project" value="GO_Central"/>
</dbReference>
<dbReference type="GO" id="GO:0008173">
    <property type="term" value="F:RNA methyltransferase activity"/>
    <property type="evidence" value="ECO:0000318"/>
    <property type="project" value="GO_Central"/>
</dbReference>
<dbReference type="GO" id="GO:0017069">
    <property type="term" value="F:snRNA binding"/>
    <property type="evidence" value="ECO:0000318"/>
    <property type="project" value="GO_Central"/>
</dbReference>
<dbReference type="GO" id="GO:0017070">
    <property type="term" value="F:U6 snRNA binding"/>
    <property type="evidence" value="ECO:0000314"/>
    <property type="project" value="UniProtKB"/>
</dbReference>
<dbReference type="GO" id="GO:0106349">
    <property type="term" value="P:snRNA methylation"/>
    <property type="evidence" value="ECO:0000315"/>
    <property type="project" value="UniProtKB"/>
</dbReference>
<dbReference type="GO" id="GO:0040031">
    <property type="term" value="P:snRNA modification"/>
    <property type="evidence" value="ECO:0000318"/>
    <property type="project" value="GO_Central"/>
</dbReference>
<dbReference type="CDD" id="cd02440">
    <property type="entry name" value="AdoMet_MTases"/>
    <property type="match status" value="1"/>
</dbReference>
<dbReference type="FunFam" id="3.40.50.150:FF:000234">
    <property type="entry name" value="Probable RNA methyltransferase At5g51130"/>
    <property type="match status" value="1"/>
</dbReference>
<dbReference type="Gene3D" id="3.40.50.150">
    <property type="entry name" value="Vaccinia Virus protein VP39"/>
    <property type="match status" value="1"/>
</dbReference>
<dbReference type="InterPro" id="IPR039772">
    <property type="entry name" value="Bin3-like"/>
</dbReference>
<dbReference type="InterPro" id="IPR010675">
    <property type="entry name" value="Bin3_C"/>
</dbReference>
<dbReference type="InterPro" id="IPR024160">
    <property type="entry name" value="BIN3_SAM-bd_dom"/>
</dbReference>
<dbReference type="InterPro" id="IPR029063">
    <property type="entry name" value="SAM-dependent_MTases_sf"/>
</dbReference>
<dbReference type="PANTHER" id="PTHR12315:SF0">
    <property type="entry name" value="7SK SNRNA METHYLPHOSPHATE CAPPING ENZYME"/>
    <property type="match status" value="1"/>
</dbReference>
<dbReference type="PANTHER" id="PTHR12315">
    <property type="entry name" value="BICOID-INTERACTING PROTEIN RELATED"/>
    <property type="match status" value="1"/>
</dbReference>
<dbReference type="Pfam" id="PF06859">
    <property type="entry name" value="Bin3"/>
    <property type="match status" value="1"/>
</dbReference>
<dbReference type="SUPFAM" id="SSF53335">
    <property type="entry name" value="S-adenosyl-L-methionine-dependent methyltransferases"/>
    <property type="match status" value="1"/>
</dbReference>
<dbReference type="PROSITE" id="PS51515">
    <property type="entry name" value="BIN3_SAM"/>
    <property type="match status" value="1"/>
</dbReference>